<gene>
    <name evidence="1" type="primary">argH</name>
    <name type="ordered locus">MA_1318</name>
</gene>
<protein>
    <recommendedName>
        <fullName evidence="1">Argininosuccinate lyase</fullName>
        <shortName evidence="1">ASAL</shortName>
        <ecNumber evidence="1">4.3.2.1</ecNumber>
    </recommendedName>
    <alternativeName>
        <fullName evidence="1">Arginosuccinase</fullName>
    </alternativeName>
</protein>
<keyword id="KW-0028">Amino-acid biosynthesis</keyword>
<keyword id="KW-0055">Arginine biosynthesis</keyword>
<keyword id="KW-0963">Cytoplasm</keyword>
<keyword id="KW-0456">Lyase</keyword>
<keyword id="KW-1185">Reference proteome</keyword>
<feature type="chain" id="PRO_0000137861" description="Argininosuccinate lyase">
    <location>
        <begin position="1"/>
        <end position="491"/>
    </location>
</feature>
<name>ARLY_METAC</name>
<dbReference type="EC" id="4.3.2.1" evidence="1"/>
<dbReference type="EMBL" id="AE010299">
    <property type="protein sequence ID" value="AAM04735.1"/>
    <property type="molecule type" value="Genomic_DNA"/>
</dbReference>
<dbReference type="RefSeq" id="WP_011021337.1">
    <property type="nucleotide sequence ID" value="NC_003552.1"/>
</dbReference>
<dbReference type="SMR" id="Q8TR65"/>
<dbReference type="FunCoup" id="Q8TR65">
    <property type="interactions" value="192"/>
</dbReference>
<dbReference type="STRING" id="188937.MA_1318"/>
<dbReference type="EnsemblBacteria" id="AAM04735">
    <property type="protein sequence ID" value="AAM04735"/>
    <property type="gene ID" value="MA_1318"/>
</dbReference>
<dbReference type="GeneID" id="1473206"/>
<dbReference type="KEGG" id="mac:MA_1318"/>
<dbReference type="HOGENOM" id="CLU_027272_2_3_2"/>
<dbReference type="InParanoid" id="Q8TR65"/>
<dbReference type="OrthoDB" id="27337at2157"/>
<dbReference type="PhylomeDB" id="Q8TR65"/>
<dbReference type="UniPathway" id="UPA00068">
    <property type="reaction ID" value="UER00114"/>
</dbReference>
<dbReference type="Proteomes" id="UP000002487">
    <property type="component" value="Chromosome"/>
</dbReference>
<dbReference type="GO" id="GO:0005829">
    <property type="term" value="C:cytosol"/>
    <property type="evidence" value="ECO:0000318"/>
    <property type="project" value="GO_Central"/>
</dbReference>
<dbReference type="GO" id="GO:0004056">
    <property type="term" value="F:argininosuccinate lyase activity"/>
    <property type="evidence" value="ECO:0000318"/>
    <property type="project" value="GO_Central"/>
</dbReference>
<dbReference type="GO" id="GO:0042450">
    <property type="term" value="P:arginine biosynthetic process via ornithine"/>
    <property type="evidence" value="ECO:0000318"/>
    <property type="project" value="GO_Central"/>
</dbReference>
<dbReference type="GO" id="GO:0006526">
    <property type="term" value="P:L-arginine biosynthetic process"/>
    <property type="evidence" value="ECO:0007669"/>
    <property type="project" value="UniProtKB-UniRule"/>
</dbReference>
<dbReference type="CDD" id="cd01359">
    <property type="entry name" value="Argininosuccinate_lyase"/>
    <property type="match status" value="1"/>
</dbReference>
<dbReference type="FunFam" id="1.10.40.30:FF:000001">
    <property type="entry name" value="Argininosuccinate lyase"/>
    <property type="match status" value="1"/>
</dbReference>
<dbReference type="FunFam" id="1.20.200.10:FF:000015">
    <property type="entry name" value="argininosuccinate lyase isoform X2"/>
    <property type="match status" value="1"/>
</dbReference>
<dbReference type="Gene3D" id="1.10.40.30">
    <property type="entry name" value="Fumarase/aspartase (C-terminal domain)"/>
    <property type="match status" value="1"/>
</dbReference>
<dbReference type="Gene3D" id="1.20.200.10">
    <property type="entry name" value="Fumarase/aspartase (Central domain)"/>
    <property type="match status" value="1"/>
</dbReference>
<dbReference type="Gene3D" id="1.10.275.10">
    <property type="entry name" value="Fumarase/aspartase (N-terminal domain)"/>
    <property type="match status" value="1"/>
</dbReference>
<dbReference type="HAMAP" id="MF_00006">
    <property type="entry name" value="Arg_succ_lyase"/>
    <property type="match status" value="1"/>
</dbReference>
<dbReference type="InterPro" id="IPR029419">
    <property type="entry name" value="Arg_succ_lyase_C"/>
</dbReference>
<dbReference type="InterPro" id="IPR009049">
    <property type="entry name" value="Argininosuccinate_lyase"/>
</dbReference>
<dbReference type="InterPro" id="IPR024083">
    <property type="entry name" value="Fumarase/histidase_N"/>
</dbReference>
<dbReference type="InterPro" id="IPR000362">
    <property type="entry name" value="Fumarate_lyase_fam"/>
</dbReference>
<dbReference type="InterPro" id="IPR022761">
    <property type="entry name" value="Fumarate_lyase_N"/>
</dbReference>
<dbReference type="InterPro" id="IPR008948">
    <property type="entry name" value="L-Aspartase-like"/>
</dbReference>
<dbReference type="NCBIfam" id="TIGR00838">
    <property type="entry name" value="argH"/>
    <property type="match status" value="1"/>
</dbReference>
<dbReference type="PANTHER" id="PTHR43814">
    <property type="entry name" value="ARGININOSUCCINATE LYASE"/>
    <property type="match status" value="1"/>
</dbReference>
<dbReference type="PANTHER" id="PTHR43814:SF1">
    <property type="entry name" value="ARGININOSUCCINATE LYASE"/>
    <property type="match status" value="1"/>
</dbReference>
<dbReference type="Pfam" id="PF14698">
    <property type="entry name" value="ASL_C2"/>
    <property type="match status" value="1"/>
</dbReference>
<dbReference type="Pfam" id="PF00206">
    <property type="entry name" value="Lyase_1"/>
    <property type="match status" value="1"/>
</dbReference>
<dbReference type="PRINTS" id="PR00145">
    <property type="entry name" value="ARGSUCLYASE"/>
</dbReference>
<dbReference type="PRINTS" id="PR00149">
    <property type="entry name" value="FUMRATELYASE"/>
</dbReference>
<dbReference type="SUPFAM" id="SSF48557">
    <property type="entry name" value="L-aspartase-like"/>
    <property type="match status" value="1"/>
</dbReference>
<comment type="catalytic activity">
    <reaction evidence="1">
        <text>2-(N(omega)-L-arginino)succinate = fumarate + L-arginine</text>
        <dbReference type="Rhea" id="RHEA:24020"/>
        <dbReference type="ChEBI" id="CHEBI:29806"/>
        <dbReference type="ChEBI" id="CHEBI:32682"/>
        <dbReference type="ChEBI" id="CHEBI:57472"/>
        <dbReference type="EC" id="4.3.2.1"/>
    </reaction>
</comment>
<comment type="pathway">
    <text evidence="1">Amino-acid biosynthesis; L-arginine biosynthesis; L-arginine from L-ornithine and carbamoyl phosphate: step 3/3.</text>
</comment>
<comment type="subcellular location">
    <subcellularLocation>
        <location evidence="1">Cytoplasm</location>
    </subcellularLocation>
</comment>
<comment type="similarity">
    <text evidence="1">Belongs to the lyase 1 family. Argininosuccinate lyase subfamily.</text>
</comment>
<sequence length="491" mass="54705">MSNILRRGRLEAAPDEEILRYASSMETDRWIFSADIAVDLAHTVMLKEQGIISAEDCSKILAGLLKIREEGMEKLDFSYEDIHISLESRLIDMVGEDVGGRMHSGRSRNDEVATCIRLTLREELLGLLEEIFALRKTLVSLAEKHTETLMPGFTHLQHAQPTTLAHHLCAHEAALGRDFDRVQDAFSRVNLCPLGAAAFASTGFNLNRKRTQELLGFEGLLENSMDAVSSRDFLIECASVFSNLMINLSRMAEELVIWSSSEFNFIELDDTYASTSSIMPQKKNPDTAELMRGKTGVAVGALMSLLTICKGLPLSYNRDLQEATPNIWRSVETVRASVRVMEGMVRTMKIHPEVLSAQSVTGFTTATELADTFVREAGIPFRTAHQIVGMLAREGEKPTIEKIDSVAEIVLGESLSSRGLTEKMIKEALNPVSNIKRRKIEGGPAPEEMQHYIGRQQTELELNEQEIATIKDSIDSAFEALLEVVDEYRKV</sequence>
<proteinExistence type="inferred from homology"/>
<reference key="1">
    <citation type="journal article" date="2002" name="Genome Res.">
        <title>The genome of Methanosarcina acetivorans reveals extensive metabolic and physiological diversity.</title>
        <authorList>
            <person name="Galagan J.E."/>
            <person name="Nusbaum C."/>
            <person name="Roy A."/>
            <person name="Endrizzi M.G."/>
            <person name="Macdonald P."/>
            <person name="FitzHugh W."/>
            <person name="Calvo S."/>
            <person name="Engels R."/>
            <person name="Smirnov S."/>
            <person name="Atnoor D."/>
            <person name="Brown A."/>
            <person name="Allen N."/>
            <person name="Naylor J."/>
            <person name="Stange-Thomann N."/>
            <person name="DeArellano K."/>
            <person name="Johnson R."/>
            <person name="Linton L."/>
            <person name="McEwan P."/>
            <person name="McKernan K."/>
            <person name="Talamas J."/>
            <person name="Tirrell A."/>
            <person name="Ye W."/>
            <person name="Zimmer A."/>
            <person name="Barber R.D."/>
            <person name="Cann I."/>
            <person name="Graham D.E."/>
            <person name="Grahame D.A."/>
            <person name="Guss A.M."/>
            <person name="Hedderich R."/>
            <person name="Ingram-Smith C."/>
            <person name="Kuettner H.C."/>
            <person name="Krzycki J.A."/>
            <person name="Leigh J.A."/>
            <person name="Li W."/>
            <person name="Liu J."/>
            <person name="Mukhopadhyay B."/>
            <person name="Reeve J.N."/>
            <person name="Smith K."/>
            <person name="Springer T.A."/>
            <person name="Umayam L.A."/>
            <person name="White O."/>
            <person name="White R.H."/>
            <person name="de Macario E.C."/>
            <person name="Ferry J.G."/>
            <person name="Jarrell K.F."/>
            <person name="Jing H."/>
            <person name="Macario A.J.L."/>
            <person name="Paulsen I.T."/>
            <person name="Pritchett M."/>
            <person name="Sowers K.R."/>
            <person name="Swanson R.V."/>
            <person name="Zinder S.H."/>
            <person name="Lander E."/>
            <person name="Metcalf W.W."/>
            <person name="Birren B."/>
        </authorList>
    </citation>
    <scope>NUCLEOTIDE SEQUENCE [LARGE SCALE GENOMIC DNA]</scope>
    <source>
        <strain>ATCC 35395 / DSM 2834 / JCM 12185 / C2A</strain>
    </source>
</reference>
<evidence type="ECO:0000255" key="1">
    <source>
        <dbReference type="HAMAP-Rule" id="MF_00006"/>
    </source>
</evidence>
<accession>Q8TR65</accession>
<organism>
    <name type="scientific">Methanosarcina acetivorans (strain ATCC 35395 / DSM 2834 / JCM 12185 / C2A)</name>
    <dbReference type="NCBI Taxonomy" id="188937"/>
    <lineage>
        <taxon>Archaea</taxon>
        <taxon>Methanobacteriati</taxon>
        <taxon>Methanobacteriota</taxon>
        <taxon>Stenosarchaea group</taxon>
        <taxon>Methanomicrobia</taxon>
        <taxon>Methanosarcinales</taxon>
        <taxon>Methanosarcinaceae</taxon>
        <taxon>Methanosarcina</taxon>
    </lineage>
</organism>